<gene>
    <name type="primary">lvsF</name>
    <name type="ORF">DDB_G0284333</name>
</gene>
<evidence type="ECO:0000255" key="1">
    <source>
        <dbReference type="PROSITE-ProRule" id="PRU00026"/>
    </source>
</evidence>
<evidence type="ECO:0000255" key="2">
    <source>
        <dbReference type="PROSITE-ProRule" id="PRU01119"/>
    </source>
</evidence>
<evidence type="ECO:0000256" key="3">
    <source>
        <dbReference type="SAM" id="MobiDB-lite"/>
    </source>
</evidence>
<evidence type="ECO:0000305" key="4"/>
<reference key="1">
    <citation type="journal article" date="2002" name="J. Cell. Biochem.">
        <title>BEACH family of proteins: phylogenetic and functional analysis of six Dictyostelium BEACH proteins.</title>
        <authorList>
            <person name="Wang N."/>
            <person name="Wu W.I."/>
            <person name="De Lozanne A."/>
        </authorList>
    </citation>
    <scope>NUCLEOTIDE SEQUENCE [GENOMIC DNA]</scope>
    <source>
        <strain>NC4A2</strain>
    </source>
</reference>
<reference key="2">
    <citation type="journal article" date="2005" name="Nature">
        <title>The genome of the social amoeba Dictyostelium discoideum.</title>
        <authorList>
            <person name="Eichinger L."/>
            <person name="Pachebat J.A."/>
            <person name="Gloeckner G."/>
            <person name="Rajandream M.A."/>
            <person name="Sucgang R."/>
            <person name="Berriman M."/>
            <person name="Song J."/>
            <person name="Olsen R."/>
            <person name="Szafranski K."/>
            <person name="Xu Q."/>
            <person name="Tunggal B."/>
            <person name="Kummerfeld S."/>
            <person name="Madera M."/>
            <person name="Konfortov B.A."/>
            <person name="Rivero F."/>
            <person name="Bankier A.T."/>
            <person name="Lehmann R."/>
            <person name="Hamlin N."/>
            <person name="Davies R."/>
            <person name="Gaudet P."/>
            <person name="Fey P."/>
            <person name="Pilcher K."/>
            <person name="Chen G."/>
            <person name="Saunders D."/>
            <person name="Sodergren E.J."/>
            <person name="Davis P."/>
            <person name="Kerhornou A."/>
            <person name="Nie X."/>
            <person name="Hall N."/>
            <person name="Anjard C."/>
            <person name="Hemphill L."/>
            <person name="Bason N."/>
            <person name="Farbrother P."/>
            <person name="Desany B."/>
            <person name="Just E."/>
            <person name="Morio T."/>
            <person name="Rost R."/>
            <person name="Churcher C.M."/>
            <person name="Cooper J."/>
            <person name="Haydock S."/>
            <person name="van Driessche N."/>
            <person name="Cronin A."/>
            <person name="Goodhead I."/>
            <person name="Muzny D.M."/>
            <person name="Mourier T."/>
            <person name="Pain A."/>
            <person name="Lu M."/>
            <person name="Harper D."/>
            <person name="Lindsay R."/>
            <person name="Hauser H."/>
            <person name="James K.D."/>
            <person name="Quiles M."/>
            <person name="Madan Babu M."/>
            <person name="Saito T."/>
            <person name="Buchrieser C."/>
            <person name="Wardroper A."/>
            <person name="Felder M."/>
            <person name="Thangavelu M."/>
            <person name="Johnson D."/>
            <person name="Knights A."/>
            <person name="Loulseged H."/>
            <person name="Mungall K.L."/>
            <person name="Oliver K."/>
            <person name="Price C."/>
            <person name="Quail M.A."/>
            <person name="Urushihara H."/>
            <person name="Hernandez J."/>
            <person name="Rabbinowitsch E."/>
            <person name="Steffen D."/>
            <person name="Sanders M."/>
            <person name="Ma J."/>
            <person name="Kohara Y."/>
            <person name="Sharp S."/>
            <person name="Simmonds M.N."/>
            <person name="Spiegler S."/>
            <person name="Tivey A."/>
            <person name="Sugano S."/>
            <person name="White B."/>
            <person name="Walker D."/>
            <person name="Woodward J.R."/>
            <person name="Winckler T."/>
            <person name="Tanaka Y."/>
            <person name="Shaulsky G."/>
            <person name="Schleicher M."/>
            <person name="Weinstock G.M."/>
            <person name="Rosenthal A."/>
            <person name="Cox E.C."/>
            <person name="Chisholm R.L."/>
            <person name="Gibbs R.A."/>
            <person name="Loomis W.F."/>
            <person name="Platzer M."/>
            <person name="Kay R.R."/>
            <person name="Williams J.G."/>
            <person name="Dear P.H."/>
            <person name="Noegel A.A."/>
            <person name="Barrell B.G."/>
            <person name="Kuspa A."/>
        </authorList>
    </citation>
    <scope>NUCLEOTIDE SEQUENCE [LARGE SCALE GENOMIC DNA]</scope>
    <source>
        <strain>AX4</strain>
    </source>
</reference>
<protein>
    <recommendedName>
        <fullName>BEACH domain-containing protein lvsF</fullName>
    </recommendedName>
</protein>
<feature type="chain" id="PRO_0000327712" description="BEACH domain-containing protein lvsF">
    <location>
        <begin position="1"/>
        <end position="1154"/>
    </location>
</feature>
<feature type="domain" description="BEACH-type PH" evidence="2">
    <location>
        <begin position="289"/>
        <end position="384"/>
    </location>
</feature>
<feature type="domain" description="BEACH" evidence="1">
    <location>
        <begin position="389"/>
        <end position="697"/>
    </location>
</feature>
<feature type="repeat" description="WD 1">
    <location>
        <begin position="858"/>
        <end position="897"/>
    </location>
</feature>
<feature type="repeat" description="WD 2">
    <location>
        <begin position="900"/>
        <end position="939"/>
    </location>
</feature>
<feature type="repeat" description="WD 3">
    <location>
        <begin position="942"/>
        <end position="980"/>
    </location>
</feature>
<feature type="repeat" description="WD 4">
    <location>
        <begin position="992"/>
        <end position="1031"/>
    </location>
</feature>
<feature type="repeat" description="WD 5">
    <location>
        <begin position="1034"/>
        <end position="1074"/>
    </location>
</feature>
<feature type="repeat" description="WD 6">
    <location>
        <begin position="1076"/>
        <end position="1110"/>
    </location>
</feature>
<feature type="repeat" description="WD 7">
    <location>
        <begin position="1119"/>
        <end position="1154"/>
    </location>
</feature>
<feature type="region of interest" description="Disordered" evidence="3">
    <location>
        <begin position="92"/>
        <end position="123"/>
    </location>
</feature>
<feature type="region of interest" description="Disordered" evidence="3">
    <location>
        <begin position="139"/>
        <end position="167"/>
    </location>
</feature>
<feature type="region of interest" description="Disordered" evidence="3">
    <location>
        <begin position="554"/>
        <end position="575"/>
    </location>
</feature>
<feature type="region of interest" description="Disordered" evidence="3">
    <location>
        <begin position="739"/>
        <end position="762"/>
    </location>
</feature>
<feature type="region of interest" description="Disordered" evidence="3">
    <location>
        <begin position="779"/>
        <end position="825"/>
    </location>
</feature>
<feature type="compositionally biased region" description="Pro residues" evidence="3">
    <location>
        <begin position="145"/>
        <end position="158"/>
    </location>
</feature>
<feature type="compositionally biased region" description="Low complexity" evidence="3">
    <location>
        <begin position="779"/>
        <end position="788"/>
    </location>
</feature>
<feature type="compositionally biased region" description="Low complexity" evidence="3">
    <location>
        <begin position="795"/>
        <end position="822"/>
    </location>
</feature>
<feature type="sequence conflict" description="In Ref. 1; AAN38984." evidence="4" ref="1">
    <original>S</original>
    <variation>F</variation>
    <location>
        <position position="161"/>
    </location>
</feature>
<feature type="sequence conflict" description="In Ref. 1; AAN38984." evidence="4" ref="1">
    <original>Q</original>
    <variation>QVSKN</variation>
    <location>
        <position position="229"/>
    </location>
</feature>
<feature type="sequence conflict" description="In Ref. 1; AAN38984." evidence="4" ref="1">
    <location>
        <begin position="729"/>
        <end position="835"/>
    </location>
</feature>
<accession>Q54PP7</accession>
<accession>Q8IHL1</accession>
<proteinExistence type="predicted"/>
<keyword id="KW-1185">Reference proteome</keyword>
<keyword id="KW-0677">Repeat</keyword>
<keyword id="KW-0853">WD repeat</keyword>
<sequence>MFSKNINKVRFNLTLMDEGEYYFDDYSAIFYPPSNTEEESWQKRIAGRILVCSSSMFFEPDDSKLPIMKFPYKDMSSIGAWLNSLSSAPPAHLPTPQPIPQSILSPSKPTPTPTPPIVVEQPSPTRSAFSRLLSFSSLTSKVTTPTPPTPTPTPPTPQPTSIAPTPTIATNPYTSFSVSPNPPSPLLSQLFEQAKPSFLASKGDIFYVKSSQVIEMKENSRNHPYIFKQYNNIDFKFSFNYVKQNIVLDVMKVFHNYSGKEKIQRDELIKQMVEDRENKIFFDITQLVDMNERNILELKCSKISPLVENPGRLLITNARLYFQPMNNIEENRLKNYSLQSIIRVLQRRHSLREIGLELFFDDGSSLFLKFNNTITRNQVYDLLVKHLCTNIMHINEQANYLLKWQNGIISNYDYLLYLNNLAGRTFNDLTQYPVFPWIIADYQSTTLDLNRNETFRDLSKPIGALNPTRLATFQDRYHQIPDDQPKFLYGTHYSTPAYVLYFLVRQVPEYMLRLQNGRFDSPNRMFYSIEETWNSVLNSTTDVKELIPEFYKPSFESSSSSRNGGGGDDDDNFENGIFLTNSENLPLGIRQDNNVINDIILPPWASSPKDFISKLHQALESEYVSQNLHHWIDLIFGYKQKGEEAVRANNLFYHLTYEGSIDIESITNPFEREGMEAQINEFGQTPRQIFKTPHPQRLPQQLRNQNLKIELSDLEQNINFIFDELNNCNINELNNDNDNNLNNNNNNNNNNNSNSNSNLNNNYIDSNINNNINNIENINSLNNENNENSNDKKNNSNSNSSDNIKNSNGFENNDNNFNNENENLNDENENLTFLGEERNNSNNWGSLNFLKFNQNIKLHKDKISALYLSNNSETIYSVSLDSCLKIYSLKEKRQIRSLNLCNLALSSFQLSKDEKYIIIGSWDNNIYVYSVGNGSISYSIPGHSDAVSCLKLHNNNILVSGSWDSSVKVWRTHRQSNGAISIEKTPIADFVDSDTEIRSIDISSNGTIFCAGSSDGYLYFYDLLTLQLIRRISCFFDELVCIKFTPDGSRIITACIDGSVKLIGIEGSEIFSFKVKGEIHCLDSDGSSLIIGTDRGLCLWSLTTGTEIKDSISPFLSQSSNESIHSLNVSINQSSNKPILLTGTEAGSISIWQQ</sequence>
<organism>
    <name type="scientific">Dictyostelium discoideum</name>
    <name type="common">Social amoeba</name>
    <dbReference type="NCBI Taxonomy" id="44689"/>
    <lineage>
        <taxon>Eukaryota</taxon>
        <taxon>Amoebozoa</taxon>
        <taxon>Evosea</taxon>
        <taxon>Eumycetozoa</taxon>
        <taxon>Dictyostelia</taxon>
        <taxon>Dictyosteliales</taxon>
        <taxon>Dictyosteliaceae</taxon>
        <taxon>Dictyostelium</taxon>
    </lineage>
</organism>
<dbReference type="EMBL" id="AY159037">
    <property type="protein sequence ID" value="AAN38984.1"/>
    <property type="molecule type" value="Genomic_DNA"/>
</dbReference>
<dbReference type="EMBL" id="AAFI02000064">
    <property type="protein sequence ID" value="EAL65214.1"/>
    <property type="molecule type" value="Genomic_DNA"/>
</dbReference>
<dbReference type="RefSeq" id="XP_638607.1">
    <property type="nucleotide sequence ID" value="XM_633515.1"/>
</dbReference>
<dbReference type="SMR" id="Q54PP7"/>
<dbReference type="FunCoup" id="Q54PP7">
    <property type="interactions" value="165"/>
</dbReference>
<dbReference type="STRING" id="44689.Q54PP7"/>
<dbReference type="GlyGen" id="Q54PP7">
    <property type="glycosylation" value="8 sites"/>
</dbReference>
<dbReference type="PaxDb" id="44689-DDB0220121"/>
<dbReference type="EnsemblProtists" id="EAL65214">
    <property type="protein sequence ID" value="EAL65214"/>
    <property type="gene ID" value="DDB_G0284333"/>
</dbReference>
<dbReference type="GeneID" id="8624578"/>
<dbReference type="KEGG" id="ddi:DDB_G0284333"/>
<dbReference type="dictyBase" id="DDB_G0284333">
    <property type="gene designation" value="lvsF"/>
</dbReference>
<dbReference type="VEuPathDB" id="AmoebaDB:DDB_G0284333"/>
<dbReference type="eggNOG" id="KOG1786">
    <property type="taxonomic scope" value="Eukaryota"/>
</dbReference>
<dbReference type="HOGENOM" id="CLU_000218_5_2_1"/>
<dbReference type="InParanoid" id="Q54PP7"/>
<dbReference type="OMA" id="QVYKRRY"/>
<dbReference type="PhylomeDB" id="Q54PP7"/>
<dbReference type="PRO" id="PR:Q54PP7"/>
<dbReference type="Proteomes" id="UP000002195">
    <property type="component" value="Chromosome 4"/>
</dbReference>
<dbReference type="CDD" id="cd06071">
    <property type="entry name" value="Beach"/>
    <property type="match status" value="1"/>
</dbReference>
<dbReference type="CDD" id="cd01201">
    <property type="entry name" value="PH_BEACH"/>
    <property type="match status" value="1"/>
</dbReference>
<dbReference type="CDD" id="cd00200">
    <property type="entry name" value="WD40"/>
    <property type="match status" value="1"/>
</dbReference>
<dbReference type="FunFam" id="1.10.1540.10:FF:000001">
    <property type="entry name" value="neurobeachin isoform X1"/>
    <property type="match status" value="1"/>
</dbReference>
<dbReference type="Gene3D" id="1.10.1540.10">
    <property type="entry name" value="BEACH domain"/>
    <property type="match status" value="1"/>
</dbReference>
<dbReference type="Gene3D" id="2.30.29.30">
    <property type="entry name" value="Pleckstrin-homology domain (PH domain)/Phosphotyrosine-binding domain (PTB)"/>
    <property type="match status" value="1"/>
</dbReference>
<dbReference type="Gene3D" id="2.130.10.10">
    <property type="entry name" value="YVTN repeat-like/Quinoprotein amine dehydrogenase"/>
    <property type="match status" value="2"/>
</dbReference>
<dbReference type="InterPro" id="IPR000409">
    <property type="entry name" value="BEACH_dom"/>
</dbReference>
<dbReference type="InterPro" id="IPR036372">
    <property type="entry name" value="BEACH_dom_sf"/>
</dbReference>
<dbReference type="InterPro" id="IPR050865">
    <property type="entry name" value="BEACH_Domain"/>
</dbReference>
<dbReference type="InterPro" id="IPR046851">
    <property type="entry name" value="NBCH_WD40"/>
</dbReference>
<dbReference type="InterPro" id="IPR023362">
    <property type="entry name" value="PH-BEACH_dom"/>
</dbReference>
<dbReference type="InterPro" id="IPR011993">
    <property type="entry name" value="PH-like_dom_sf"/>
</dbReference>
<dbReference type="InterPro" id="IPR015943">
    <property type="entry name" value="WD40/YVTN_repeat-like_dom_sf"/>
</dbReference>
<dbReference type="InterPro" id="IPR036322">
    <property type="entry name" value="WD40_repeat_dom_sf"/>
</dbReference>
<dbReference type="InterPro" id="IPR001680">
    <property type="entry name" value="WD40_rpt"/>
</dbReference>
<dbReference type="PANTHER" id="PTHR13743">
    <property type="entry name" value="BEIGE/BEACH-RELATED"/>
    <property type="match status" value="1"/>
</dbReference>
<dbReference type="PANTHER" id="PTHR13743:SF123">
    <property type="entry name" value="PROTEIN FAN"/>
    <property type="match status" value="1"/>
</dbReference>
<dbReference type="Pfam" id="PF02138">
    <property type="entry name" value="Beach"/>
    <property type="match status" value="1"/>
</dbReference>
<dbReference type="Pfam" id="PF20426">
    <property type="entry name" value="NBCH_WD40"/>
    <property type="match status" value="1"/>
</dbReference>
<dbReference type="Pfam" id="PF14844">
    <property type="entry name" value="PH_BEACH"/>
    <property type="match status" value="1"/>
</dbReference>
<dbReference type="Pfam" id="PF25400">
    <property type="entry name" value="PH_FAN"/>
    <property type="match status" value="2"/>
</dbReference>
<dbReference type="PRINTS" id="PR01217">
    <property type="entry name" value="PRICHEXTENSN"/>
</dbReference>
<dbReference type="SMART" id="SM01026">
    <property type="entry name" value="Beach"/>
    <property type="match status" value="1"/>
</dbReference>
<dbReference type="SMART" id="SM00320">
    <property type="entry name" value="WD40"/>
    <property type="match status" value="7"/>
</dbReference>
<dbReference type="SUPFAM" id="SSF81837">
    <property type="entry name" value="BEACH domain"/>
    <property type="match status" value="1"/>
</dbReference>
<dbReference type="SUPFAM" id="SSF50729">
    <property type="entry name" value="PH domain-like"/>
    <property type="match status" value="1"/>
</dbReference>
<dbReference type="SUPFAM" id="SSF50978">
    <property type="entry name" value="WD40 repeat-like"/>
    <property type="match status" value="1"/>
</dbReference>
<dbReference type="PROSITE" id="PS50197">
    <property type="entry name" value="BEACH"/>
    <property type="match status" value="1"/>
</dbReference>
<dbReference type="PROSITE" id="PS51783">
    <property type="entry name" value="PH_BEACH"/>
    <property type="match status" value="1"/>
</dbReference>
<dbReference type="PROSITE" id="PS50082">
    <property type="entry name" value="WD_REPEATS_2"/>
    <property type="match status" value="2"/>
</dbReference>
<dbReference type="PROSITE" id="PS50294">
    <property type="entry name" value="WD_REPEATS_REGION"/>
    <property type="match status" value="1"/>
</dbReference>
<name>LVSF_DICDI</name>